<protein>
    <recommendedName>
        <fullName>DNA polymerase I</fullName>
        <shortName>POL I</shortName>
        <ecNumber>2.7.7.7</ecNumber>
    </recommendedName>
</protein>
<dbReference type="EC" id="2.7.7.7"/>
<dbReference type="EMBL" id="U78771">
    <property type="protein sequence ID" value="AAB64184.1"/>
    <property type="molecule type" value="Genomic_DNA"/>
</dbReference>
<dbReference type="EMBL" id="AM406671">
    <property type="protein sequence ID" value="CAL98989.1"/>
    <property type="molecule type" value="Genomic_DNA"/>
</dbReference>
<dbReference type="RefSeq" id="WP_011836063.1">
    <property type="nucleotide sequence ID" value="NC_009004.1"/>
</dbReference>
<dbReference type="SMR" id="O32801"/>
<dbReference type="STRING" id="416870.llmg_2425"/>
<dbReference type="KEGG" id="llm:llmg_2425"/>
<dbReference type="eggNOG" id="COG0258">
    <property type="taxonomic scope" value="Bacteria"/>
</dbReference>
<dbReference type="eggNOG" id="COG0749">
    <property type="taxonomic scope" value="Bacteria"/>
</dbReference>
<dbReference type="HOGENOM" id="CLU_004675_0_0_9"/>
<dbReference type="OrthoDB" id="9806424at2"/>
<dbReference type="PhylomeDB" id="O32801"/>
<dbReference type="Proteomes" id="UP000000364">
    <property type="component" value="Chromosome"/>
</dbReference>
<dbReference type="GO" id="GO:0008408">
    <property type="term" value="F:3'-5' exonuclease activity"/>
    <property type="evidence" value="ECO:0007669"/>
    <property type="project" value="InterPro"/>
</dbReference>
<dbReference type="GO" id="GO:0008409">
    <property type="term" value="F:5'-3' exonuclease activity"/>
    <property type="evidence" value="ECO:0007669"/>
    <property type="project" value="InterPro"/>
</dbReference>
<dbReference type="GO" id="GO:0003677">
    <property type="term" value="F:DNA binding"/>
    <property type="evidence" value="ECO:0007669"/>
    <property type="project" value="UniProtKB-KW"/>
</dbReference>
<dbReference type="GO" id="GO:0003887">
    <property type="term" value="F:DNA-directed DNA polymerase activity"/>
    <property type="evidence" value="ECO:0007669"/>
    <property type="project" value="UniProtKB-KW"/>
</dbReference>
<dbReference type="GO" id="GO:0006261">
    <property type="term" value="P:DNA-templated DNA replication"/>
    <property type="evidence" value="ECO:0007669"/>
    <property type="project" value="InterPro"/>
</dbReference>
<dbReference type="GO" id="GO:0006302">
    <property type="term" value="P:double-strand break repair"/>
    <property type="evidence" value="ECO:0007669"/>
    <property type="project" value="TreeGrafter"/>
</dbReference>
<dbReference type="CDD" id="cd08637">
    <property type="entry name" value="DNA_pol_A_pol_I_C"/>
    <property type="match status" value="1"/>
</dbReference>
<dbReference type="CDD" id="cd06140">
    <property type="entry name" value="DNA_polA_I_Bacillus_like_exo"/>
    <property type="match status" value="1"/>
</dbReference>
<dbReference type="CDD" id="cd09898">
    <property type="entry name" value="H3TH_53EXO"/>
    <property type="match status" value="1"/>
</dbReference>
<dbReference type="CDD" id="cd09859">
    <property type="entry name" value="PIN_53EXO"/>
    <property type="match status" value="1"/>
</dbReference>
<dbReference type="FunFam" id="1.10.150.20:FF:000002">
    <property type="entry name" value="DNA polymerase I"/>
    <property type="match status" value="1"/>
</dbReference>
<dbReference type="FunFam" id="1.10.150.20:FF:000003">
    <property type="entry name" value="DNA polymerase I"/>
    <property type="match status" value="1"/>
</dbReference>
<dbReference type="FunFam" id="1.20.1060.10:FF:000001">
    <property type="entry name" value="DNA polymerase I"/>
    <property type="match status" value="1"/>
</dbReference>
<dbReference type="FunFam" id="3.40.50.1010:FF:000001">
    <property type="entry name" value="DNA polymerase I"/>
    <property type="match status" value="1"/>
</dbReference>
<dbReference type="Gene3D" id="3.30.70.370">
    <property type="match status" value="1"/>
</dbReference>
<dbReference type="Gene3D" id="1.10.150.20">
    <property type="entry name" value="5' to 3' exonuclease, C-terminal subdomain"/>
    <property type="match status" value="2"/>
</dbReference>
<dbReference type="Gene3D" id="3.40.50.1010">
    <property type="entry name" value="5'-nuclease"/>
    <property type="match status" value="1"/>
</dbReference>
<dbReference type="Gene3D" id="3.30.420.10">
    <property type="entry name" value="Ribonuclease H-like superfamily/Ribonuclease H"/>
    <property type="match status" value="1"/>
</dbReference>
<dbReference type="Gene3D" id="1.20.1060.10">
    <property type="entry name" value="Taq DNA Polymerase, Chain T, domain 4"/>
    <property type="match status" value="1"/>
</dbReference>
<dbReference type="InterPro" id="IPR002562">
    <property type="entry name" value="3'-5'_exonuclease_dom"/>
</dbReference>
<dbReference type="InterPro" id="IPR020046">
    <property type="entry name" value="5-3_exonucl_a-hlix_arch_N"/>
</dbReference>
<dbReference type="InterPro" id="IPR002421">
    <property type="entry name" value="5-3_exonuclease"/>
</dbReference>
<dbReference type="InterPro" id="IPR036279">
    <property type="entry name" value="5-3_exonuclease_C_sf"/>
</dbReference>
<dbReference type="InterPro" id="IPR019760">
    <property type="entry name" value="DNA-dir_DNA_pol_A_CS"/>
</dbReference>
<dbReference type="InterPro" id="IPR001098">
    <property type="entry name" value="DNA-dir_DNA_pol_A_palm_dom"/>
</dbReference>
<dbReference type="InterPro" id="IPR043502">
    <property type="entry name" value="DNA/RNA_pol_sf"/>
</dbReference>
<dbReference type="InterPro" id="IPR054690">
    <property type="entry name" value="DNA_polI_exonuclease"/>
</dbReference>
<dbReference type="InterPro" id="IPR020045">
    <property type="entry name" value="DNA_polI_H3TH"/>
</dbReference>
<dbReference type="InterPro" id="IPR018320">
    <property type="entry name" value="DNA_polymerase_1"/>
</dbReference>
<dbReference type="InterPro" id="IPR002298">
    <property type="entry name" value="DNA_polymerase_A"/>
</dbReference>
<dbReference type="InterPro" id="IPR008918">
    <property type="entry name" value="HhH2"/>
</dbReference>
<dbReference type="InterPro" id="IPR029060">
    <property type="entry name" value="PIN-like_dom_sf"/>
</dbReference>
<dbReference type="InterPro" id="IPR012337">
    <property type="entry name" value="RNaseH-like_sf"/>
</dbReference>
<dbReference type="InterPro" id="IPR036397">
    <property type="entry name" value="RNaseH_sf"/>
</dbReference>
<dbReference type="NCBIfam" id="TIGR00593">
    <property type="entry name" value="pola"/>
    <property type="match status" value="1"/>
</dbReference>
<dbReference type="NCBIfam" id="NF004397">
    <property type="entry name" value="PRK05755.1"/>
    <property type="match status" value="1"/>
</dbReference>
<dbReference type="PANTHER" id="PTHR10133">
    <property type="entry name" value="DNA POLYMERASE I"/>
    <property type="match status" value="1"/>
</dbReference>
<dbReference type="PANTHER" id="PTHR10133:SF27">
    <property type="entry name" value="DNA POLYMERASE NU"/>
    <property type="match status" value="1"/>
</dbReference>
<dbReference type="Pfam" id="PF01367">
    <property type="entry name" value="5_3_exonuc"/>
    <property type="match status" value="1"/>
</dbReference>
<dbReference type="Pfam" id="PF02739">
    <property type="entry name" value="5_3_exonuc_N"/>
    <property type="match status" value="1"/>
</dbReference>
<dbReference type="Pfam" id="PF00476">
    <property type="entry name" value="DNA_pol_A"/>
    <property type="match status" value="1"/>
</dbReference>
<dbReference type="Pfam" id="PF22619">
    <property type="entry name" value="DNA_polI_exo1"/>
    <property type="match status" value="1"/>
</dbReference>
<dbReference type="PRINTS" id="PR00868">
    <property type="entry name" value="DNAPOLI"/>
</dbReference>
<dbReference type="SMART" id="SM00474">
    <property type="entry name" value="35EXOc"/>
    <property type="match status" value="1"/>
</dbReference>
<dbReference type="SMART" id="SM00475">
    <property type="entry name" value="53EXOc"/>
    <property type="match status" value="1"/>
</dbReference>
<dbReference type="SMART" id="SM00279">
    <property type="entry name" value="HhH2"/>
    <property type="match status" value="1"/>
</dbReference>
<dbReference type="SMART" id="SM00482">
    <property type="entry name" value="POLAc"/>
    <property type="match status" value="1"/>
</dbReference>
<dbReference type="SUPFAM" id="SSF47807">
    <property type="entry name" value="5' to 3' exonuclease, C-terminal subdomain"/>
    <property type="match status" value="1"/>
</dbReference>
<dbReference type="SUPFAM" id="SSF56672">
    <property type="entry name" value="DNA/RNA polymerases"/>
    <property type="match status" value="1"/>
</dbReference>
<dbReference type="SUPFAM" id="SSF88723">
    <property type="entry name" value="PIN domain-like"/>
    <property type="match status" value="1"/>
</dbReference>
<dbReference type="SUPFAM" id="SSF53098">
    <property type="entry name" value="Ribonuclease H-like"/>
    <property type="match status" value="1"/>
</dbReference>
<dbReference type="PROSITE" id="PS00447">
    <property type="entry name" value="DNA_POLYMERASE_A"/>
    <property type="match status" value="1"/>
</dbReference>
<name>DPO1_LACLM</name>
<feature type="chain" id="PRO_0000101244" description="DNA polymerase I">
    <location>
        <begin position="1"/>
        <end position="877"/>
    </location>
</feature>
<feature type="domain" description="5'-3' exonuclease" evidence="2">
    <location>
        <begin position="180"/>
        <end position="272"/>
    </location>
</feature>
<feature type="domain" description="3'-5' exonuclease" evidence="2">
    <location>
        <begin position="312"/>
        <end position="468"/>
    </location>
</feature>
<feature type="sequence conflict" description="In Ref. 1; AAB64184." evidence="3" ref="1">
    <original>V</original>
    <variation>E</variation>
    <location>
        <position position="585"/>
    </location>
</feature>
<organism>
    <name type="scientific">Lactococcus lactis subsp. cremoris (strain MG1363)</name>
    <dbReference type="NCBI Taxonomy" id="416870"/>
    <lineage>
        <taxon>Bacteria</taxon>
        <taxon>Bacillati</taxon>
        <taxon>Bacillota</taxon>
        <taxon>Bacilli</taxon>
        <taxon>Lactobacillales</taxon>
        <taxon>Streptococcaceae</taxon>
        <taxon>Lactococcus</taxon>
        <taxon>Lactococcus cremoris subsp. cremoris</taxon>
    </lineage>
</organism>
<reference key="1">
    <citation type="journal article" date="1997" name="J. Bacteriol.">
        <title>Characterization of Lactococcus lactis UV-sensitive mutants obtained by ISS1 transposition.</title>
        <authorList>
            <person name="Duwat P."/>
            <person name="Cochu A."/>
            <person name="Ehrlich S.D."/>
            <person name="Gruss A."/>
        </authorList>
    </citation>
    <scope>NUCLEOTIDE SEQUENCE [GENOMIC DNA]</scope>
</reference>
<reference key="2">
    <citation type="journal article" date="2007" name="J. Bacteriol.">
        <title>The complete genome sequence of the lactic acid bacterial paradigm Lactococcus lactis subsp. cremoris MG1363.</title>
        <authorList>
            <person name="Wegmann U."/>
            <person name="O'Connell-Motherway M."/>
            <person name="Zomer A."/>
            <person name="Buist G."/>
            <person name="Shearman C."/>
            <person name="Canchaya C."/>
            <person name="Ventura M."/>
            <person name="Goesmann A."/>
            <person name="Gasson M.J."/>
            <person name="Kuipers O.P."/>
            <person name="van Sinderen D."/>
            <person name="Kok J."/>
        </authorList>
    </citation>
    <scope>NUCLEOTIDE SEQUENCE [LARGE SCALE GENOMIC DNA]</scope>
    <source>
        <strain>MG1363</strain>
    </source>
</reference>
<evidence type="ECO:0000250" key="1"/>
<evidence type="ECO:0000255" key="2"/>
<evidence type="ECO:0000305" key="3"/>
<accession>O32801</accession>
<accession>A2RNU5</accession>
<comment type="function">
    <text evidence="1">In addition to polymerase activity, this DNA polymerase exhibits 3'-5' and 5'-3' exonuclease activity.</text>
</comment>
<comment type="catalytic activity">
    <reaction>
        <text>DNA(n) + a 2'-deoxyribonucleoside 5'-triphosphate = DNA(n+1) + diphosphate</text>
        <dbReference type="Rhea" id="RHEA:22508"/>
        <dbReference type="Rhea" id="RHEA-COMP:17339"/>
        <dbReference type="Rhea" id="RHEA-COMP:17340"/>
        <dbReference type="ChEBI" id="CHEBI:33019"/>
        <dbReference type="ChEBI" id="CHEBI:61560"/>
        <dbReference type="ChEBI" id="CHEBI:173112"/>
        <dbReference type="EC" id="2.7.7.7"/>
    </reaction>
</comment>
<comment type="subunit">
    <text>Single-chain monomer with multiple functions.</text>
</comment>
<comment type="similarity">
    <text evidence="3">Belongs to the DNA polymerase type-A family.</text>
</comment>
<keyword id="KW-0227">DNA damage</keyword>
<keyword id="KW-0234">DNA repair</keyword>
<keyword id="KW-0235">DNA replication</keyword>
<keyword id="KW-0238">DNA-binding</keyword>
<keyword id="KW-0239">DNA-directed DNA polymerase</keyword>
<keyword id="KW-0269">Exonuclease</keyword>
<keyword id="KW-0378">Hydrolase</keyword>
<keyword id="KW-0540">Nuclease</keyword>
<keyword id="KW-0548">Nucleotidyltransferase</keyword>
<keyword id="KW-0808">Transferase</keyword>
<gene>
    <name type="primary">polA</name>
    <name type="ordered locus">llmg_2425</name>
</gene>
<sequence length="877" mass="98866">MEDKNRLLLIDGSSVAFRAFFALYNQLDRFKAPNGLHTNAIFAFHTMLSSLMERIQPTHVLIAFDAGKTTFRTEMFADYKGGRSKTPDEFREQLPFIKEMIEKLGIRHYELANYEADDIIGTLDKMAEAPDVNFDVTIVTGDKDMIQLVDGNTRVEISKKGVAEFEEFTPDYLLEKMGLTPSQFIDLKALMGDSSDNYPGVTKVGEKTGLKLLQEFGSLENLYENVETLKASKMKDNLIADKEMAFLSQQLATINTKAPLEIGLEDTLLKEKNVAELGQFYDEMGFSQFKSKLLADGGGEVTDETVSEEIKFEIVTDKSSVASVNADDFFYLETLGENYHREQIVAFAWGNSEKIYVSKNLDLLTEMKFPENTYDFKKNRVLLSHLNIELPLVKFDAMLAKYLISTTEDNKISTIARLFDVGHLATDEEIFGKGTKLALPDDEILFDHLARKIRVLARAKEKMMAELIENEQEHLLSDMELPLAEVLAKMEITGISVSQNTLEEIGAENEEKLASLTREIYDLAGEEFNINSPKQLGVILFEKLQLPVGKKTKTGYSTAVDVLEDLAALSPVVAKILEYRQINKVQSTYVKGLIPQIADDGKIHTRYVQDLTQTGRLSSVDPNLQNIPVRLEEGRKIRKAFVPSQDSLLLSSDYSQIELRVLAHISADEHLIDAFKHGADIHTSTAMRVFGIEKAEDVTANDRRNAKAVNFGVVYGISDFGLARNLGITRKDAKNYIETYFERYPGIKTYMENIVREARDKGFVETMSHRRRKIPDINARNFNVRGFAERTAINSPIQGSAADILKIAMINLDKALTERQSKSKLLLQVHDEIILDVPLEELEDIKALVKQTMEEAIELAVPLKVDDNTGKTWYEAK</sequence>
<proteinExistence type="inferred from homology"/>